<reference key="1">
    <citation type="journal article" date="2007" name="Proc. Natl. Acad. Sci. U.S.A.">
        <title>Deep-sea vent epsilon-proteobacterial genomes provide insights into emergence of pathogens.</title>
        <authorList>
            <person name="Nakagawa S."/>
            <person name="Takaki Y."/>
            <person name="Shimamura S."/>
            <person name="Reysenbach A.-L."/>
            <person name="Takai K."/>
            <person name="Horikoshi K."/>
        </authorList>
    </citation>
    <scope>NUCLEOTIDE SEQUENCE [LARGE SCALE GENOMIC DNA]</scope>
    <source>
        <strain>NBC37-1</strain>
    </source>
</reference>
<dbReference type="EMBL" id="AP009179">
    <property type="protein sequence ID" value="BAF71330.1"/>
    <property type="molecule type" value="Genomic_DNA"/>
</dbReference>
<dbReference type="RefSeq" id="WP_011980063.1">
    <property type="nucleotide sequence ID" value="NC_009663.1"/>
</dbReference>
<dbReference type="SMR" id="A6Q771"/>
<dbReference type="STRING" id="387093.SUN_0370"/>
<dbReference type="KEGG" id="sun:SUN_0370"/>
<dbReference type="eggNOG" id="COG0806">
    <property type="taxonomic scope" value="Bacteria"/>
</dbReference>
<dbReference type="HOGENOM" id="CLU_077636_2_0_7"/>
<dbReference type="OrthoDB" id="9810331at2"/>
<dbReference type="Proteomes" id="UP000006378">
    <property type="component" value="Chromosome"/>
</dbReference>
<dbReference type="GO" id="GO:0005737">
    <property type="term" value="C:cytoplasm"/>
    <property type="evidence" value="ECO:0007669"/>
    <property type="project" value="UniProtKB-SubCell"/>
</dbReference>
<dbReference type="GO" id="GO:0005840">
    <property type="term" value="C:ribosome"/>
    <property type="evidence" value="ECO:0007669"/>
    <property type="project" value="InterPro"/>
</dbReference>
<dbReference type="GO" id="GO:0043022">
    <property type="term" value="F:ribosome binding"/>
    <property type="evidence" value="ECO:0007669"/>
    <property type="project" value="InterPro"/>
</dbReference>
<dbReference type="GO" id="GO:0042274">
    <property type="term" value="P:ribosomal small subunit biogenesis"/>
    <property type="evidence" value="ECO:0007669"/>
    <property type="project" value="UniProtKB-UniRule"/>
</dbReference>
<dbReference type="GO" id="GO:0006364">
    <property type="term" value="P:rRNA processing"/>
    <property type="evidence" value="ECO:0007669"/>
    <property type="project" value="UniProtKB-UniRule"/>
</dbReference>
<dbReference type="Gene3D" id="2.30.30.240">
    <property type="entry name" value="PRC-barrel domain"/>
    <property type="match status" value="1"/>
</dbReference>
<dbReference type="Gene3D" id="2.40.30.60">
    <property type="entry name" value="RimM"/>
    <property type="match status" value="1"/>
</dbReference>
<dbReference type="HAMAP" id="MF_00014">
    <property type="entry name" value="Ribosome_mat_RimM"/>
    <property type="match status" value="1"/>
</dbReference>
<dbReference type="InterPro" id="IPR011033">
    <property type="entry name" value="PRC_barrel-like_sf"/>
</dbReference>
<dbReference type="InterPro" id="IPR056792">
    <property type="entry name" value="PRC_RimM"/>
</dbReference>
<dbReference type="InterPro" id="IPR011961">
    <property type="entry name" value="RimM"/>
</dbReference>
<dbReference type="InterPro" id="IPR002676">
    <property type="entry name" value="RimM_N"/>
</dbReference>
<dbReference type="InterPro" id="IPR036976">
    <property type="entry name" value="RimM_N_sf"/>
</dbReference>
<dbReference type="InterPro" id="IPR009000">
    <property type="entry name" value="Transl_B-barrel_sf"/>
</dbReference>
<dbReference type="NCBIfam" id="TIGR02273">
    <property type="entry name" value="16S_RimM"/>
    <property type="match status" value="1"/>
</dbReference>
<dbReference type="PANTHER" id="PTHR33692">
    <property type="entry name" value="RIBOSOME MATURATION FACTOR RIMM"/>
    <property type="match status" value="1"/>
</dbReference>
<dbReference type="PANTHER" id="PTHR33692:SF1">
    <property type="entry name" value="RIBOSOME MATURATION FACTOR RIMM"/>
    <property type="match status" value="1"/>
</dbReference>
<dbReference type="Pfam" id="PF24986">
    <property type="entry name" value="PRC_RimM"/>
    <property type="match status" value="1"/>
</dbReference>
<dbReference type="Pfam" id="PF01782">
    <property type="entry name" value="RimM"/>
    <property type="match status" value="1"/>
</dbReference>
<dbReference type="SUPFAM" id="SSF50346">
    <property type="entry name" value="PRC-barrel domain"/>
    <property type="match status" value="1"/>
</dbReference>
<dbReference type="SUPFAM" id="SSF50447">
    <property type="entry name" value="Translation proteins"/>
    <property type="match status" value="1"/>
</dbReference>
<sequence>MQKPINENFFIAQIGRTVGLWGDLKLHLHTDFPEQFKVGNSYQSNRGELTISDINFKRGTIRFQGYESIDAAKKLTNTKLYADEAQTKEQCPLEEGQHFWFNVIGCTVNQGDELLGVVDDIQRLADVDYLSIKTDKALVDTGLPKNFLVPYIDRYVINTDEKSKIVHVKDAKDILEAS</sequence>
<evidence type="ECO:0000255" key="1">
    <source>
        <dbReference type="HAMAP-Rule" id="MF_00014"/>
    </source>
</evidence>
<proteinExistence type="inferred from homology"/>
<protein>
    <recommendedName>
        <fullName evidence="1">Ribosome maturation factor RimM</fullName>
    </recommendedName>
</protein>
<gene>
    <name evidence="1" type="primary">rimM</name>
    <name type="ordered locus">SUN_0370</name>
</gene>
<feature type="chain" id="PRO_1000001242" description="Ribosome maturation factor RimM">
    <location>
        <begin position="1"/>
        <end position="178"/>
    </location>
</feature>
<feature type="domain" description="PRC barrel" evidence="1">
    <location>
        <begin position="95"/>
        <end position="174"/>
    </location>
</feature>
<name>RIMM_SULNB</name>
<keyword id="KW-0143">Chaperone</keyword>
<keyword id="KW-0963">Cytoplasm</keyword>
<keyword id="KW-0690">Ribosome biogenesis</keyword>
<keyword id="KW-0698">rRNA processing</keyword>
<comment type="function">
    <text evidence="1">An accessory protein needed during the final step in the assembly of 30S ribosomal subunit, possibly for assembly of the head region. Essential for efficient processing of 16S rRNA. May be needed both before and after RbfA during the maturation of 16S rRNA. It has affinity for free ribosomal 30S subunits but not for 70S ribosomes.</text>
</comment>
<comment type="subunit">
    <text evidence="1">Binds ribosomal protein uS19.</text>
</comment>
<comment type="subcellular location">
    <subcellularLocation>
        <location evidence="1">Cytoplasm</location>
    </subcellularLocation>
</comment>
<comment type="domain">
    <text evidence="1">The PRC barrel domain binds ribosomal protein uS19.</text>
</comment>
<comment type="similarity">
    <text evidence="1">Belongs to the RimM family.</text>
</comment>
<organism>
    <name type="scientific">Sulfurovum sp. (strain NBC37-1)</name>
    <dbReference type="NCBI Taxonomy" id="387093"/>
    <lineage>
        <taxon>Bacteria</taxon>
        <taxon>Pseudomonadati</taxon>
        <taxon>Campylobacterota</taxon>
        <taxon>Epsilonproteobacteria</taxon>
        <taxon>Campylobacterales</taxon>
        <taxon>Sulfurovaceae</taxon>
        <taxon>Sulfurovum</taxon>
    </lineage>
</organism>
<accession>A6Q771</accession>